<gene>
    <name evidence="5" type="primary">decr-1.2</name>
    <name evidence="5" type="ORF">W01C9.4</name>
</gene>
<dbReference type="EC" id="1.3.1.124" evidence="1"/>
<dbReference type="EMBL" id="Z49969">
    <property type="protein sequence ID" value="CAA90268.1"/>
    <property type="molecule type" value="Genomic_DNA"/>
</dbReference>
<dbReference type="PIR" id="T26051">
    <property type="entry name" value="T26051"/>
</dbReference>
<dbReference type="RefSeq" id="NP_495805.1">
    <property type="nucleotide sequence ID" value="NM_063404.3"/>
</dbReference>
<dbReference type="SMR" id="Q23116"/>
<dbReference type="FunCoup" id="Q23116">
    <property type="interactions" value="1153"/>
</dbReference>
<dbReference type="STRING" id="6239.W01C9.4.1"/>
<dbReference type="PaxDb" id="6239-W01C9.4"/>
<dbReference type="PeptideAtlas" id="Q23116"/>
<dbReference type="EnsemblMetazoa" id="W01C9.4.1">
    <property type="protein sequence ID" value="W01C9.4.1"/>
    <property type="gene ID" value="WBGene00012177"/>
</dbReference>
<dbReference type="GeneID" id="189090"/>
<dbReference type="KEGG" id="cel:CELE_W01C9.4"/>
<dbReference type="UCSC" id="W01C9.4">
    <property type="organism name" value="c. elegans"/>
</dbReference>
<dbReference type="AGR" id="WB:WBGene00012177"/>
<dbReference type="CTD" id="189090"/>
<dbReference type="WormBase" id="W01C9.4">
    <property type="protein sequence ID" value="CE02370"/>
    <property type="gene ID" value="WBGene00012177"/>
    <property type="gene designation" value="decr-1.2"/>
</dbReference>
<dbReference type="eggNOG" id="KOG0725">
    <property type="taxonomic scope" value="Eukaryota"/>
</dbReference>
<dbReference type="GeneTree" id="ENSGT00940000153801"/>
<dbReference type="HOGENOM" id="CLU_010194_1_2_1"/>
<dbReference type="InParanoid" id="Q23116"/>
<dbReference type="OMA" id="GKAMTKY"/>
<dbReference type="OrthoDB" id="1888931at2759"/>
<dbReference type="PhylomeDB" id="Q23116"/>
<dbReference type="Reactome" id="R-CEL-77288">
    <property type="pathway name" value="mitochondrial fatty acid beta-oxidation of unsaturated fatty acids"/>
</dbReference>
<dbReference type="PRO" id="PR:Q23116"/>
<dbReference type="Proteomes" id="UP000001940">
    <property type="component" value="Chromosome II"/>
</dbReference>
<dbReference type="Bgee" id="WBGene00012177">
    <property type="expression patterns" value="Expressed in pharyngeal muscle cell (C elegans) and 2 other cell types or tissues"/>
</dbReference>
<dbReference type="GO" id="GO:0005739">
    <property type="term" value="C:mitochondrion"/>
    <property type="evidence" value="ECO:0000318"/>
    <property type="project" value="GO_Central"/>
</dbReference>
<dbReference type="GO" id="GO:0008670">
    <property type="term" value="F:2,4-dienoyl-CoA reductase (NADPH) activity"/>
    <property type="evidence" value="ECO:0000318"/>
    <property type="project" value="GO_Central"/>
</dbReference>
<dbReference type="GO" id="GO:0006635">
    <property type="term" value="P:fatty acid beta-oxidation"/>
    <property type="evidence" value="ECO:0000318"/>
    <property type="project" value="GO_Central"/>
</dbReference>
<dbReference type="CDD" id="cd05369">
    <property type="entry name" value="TER_DECR_SDR_a"/>
    <property type="match status" value="1"/>
</dbReference>
<dbReference type="Gene3D" id="3.40.50.720">
    <property type="entry name" value="NAD(P)-binding Rossmann-like Domain"/>
    <property type="match status" value="1"/>
</dbReference>
<dbReference type="InterPro" id="IPR036291">
    <property type="entry name" value="NAD(P)-bd_dom_sf"/>
</dbReference>
<dbReference type="InterPro" id="IPR002347">
    <property type="entry name" value="SDR_fam"/>
</dbReference>
<dbReference type="PANTHER" id="PTHR43658:SF8">
    <property type="entry name" value="17-BETA-HYDROXYSTEROID DEHYDROGENASE 14-RELATED"/>
    <property type="match status" value="1"/>
</dbReference>
<dbReference type="PANTHER" id="PTHR43658">
    <property type="entry name" value="SHORT-CHAIN DEHYDROGENASE/REDUCTASE"/>
    <property type="match status" value="1"/>
</dbReference>
<dbReference type="Pfam" id="PF13561">
    <property type="entry name" value="adh_short_C2"/>
    <property type="match status" value="1"/>
</dbReference>
<dbReference type="PRINTS" id="PR00081">
    <property type="entry name" value="GDHRDH"/>
</dbReference>
<dbReference type="SUPFAM" id="SSF51735">
    <property type="entry name" value="NAD(P)-binding Rossmann-fold domains"/>
    <property type="match status" value="1"/>
</dbReference>
<sequence length="309" mass="33263">MACKNPKKFFPIRKSPVLRDGAFKGKLVLVTGGGTGIGKAIATTFAHLRATVVIAARRMEKLEQTARDITKITGGTCEPFQMDIKDPGMVSDAFDKIDMKFGKVPEILVNNAAGNFIMATELLSSNAYGTIIDIVLKGTFNVTTELGKRCIQNKTGASITSITAGYARAGAPFIVPSAVSKAGVETMTKSLATEWSKYGLRFNAVSPGPIPTKGAWGRLNSGEMGDIAEKMKFLNPEGRVGSPEEVANLVAFISSDHMSFLNGAIIDLDGGQQHFNHGSHMGDFLHSWDHKNWEDAENLIRGRTGKEKA</sequence>
<feature type="chain" id="PRO_0000054881" description="Probable 2,4-dienoyl-CoA reductase decr-1.2 [(3E)-enoyl-CoA-producing]" evidence="4">
    <location>
        <begin position="1"/>
        <end position="309"/>
    </location>
</feature>
<feature type="active site" description="Proton acceptor" evidence="3">
    <location>
        <position position="166"/>
    </location>
</feature>
<feature type="binding site" evidence="3">
    <location>
        <begin position="28"/>
        <end position="60"/>
    </location>
    <ligand>
        <name>NADP(+)</name>
        <dbReference type="ChEBI" id="CHEBI:58349"/>
    </ligand>
</feature>
<feature type="binding site" evidence="1">
    <location>
        <begin position="32"/>
        <end position="37"/>
    </location>
    <ligand>
        <name>NADP(+)</name>
        <dbReference type="ChEBI" id="CHEBI:58349"/>
    </ligand>
</feature>
<feature type="binding site" evidence="1">
    <location>
        <position position="57"/>
    </location>
    <ligand>
        <name>NADP(+)</name>
        <dbReference type="ChEBI" id="CHEBI:58349"/>
    </ligand>
</feature>
<feature type="binding site" evidence="2">
    <location>
        <position position="57"/>
    </location>
    <ligand>
        <name>substrate</name>
    </ligand>
</feature>
<feature type="binding site" evidence="1">
    <location>
        <position position="83"/>
    </location>
    <ligand>
        <name>NADP(+)</name>
        <dbReference type="ChEBI" id="CHEBI:58349"/>
    </ligand>
</feature>
<feature type="binding site" evidence="1">
    <location>
        <position position="116"/>
    </location>
    <ligand>
        <name>substrate</name>
    </ligand>
</feature>
<feature type="binding site" evidence="1">
    <location>
        <position position="124"/>
    </location>
    <ligand>
        <name>substrate</name>
    </ligand>
</feature>
<feature type="binding site" evidence="1">
    <location>
        <position position="181"/>
    </location>
    <ligand>
        <name>NADP(+)</name>
        <dbReference type="ChEBI" id="CHEBI:58349"/>
    </ligand>
</feature>
<feature type="binding site" evidence="1">
    <location>
        <begin position="207"/>
        <end position="210"/>
    </location>
    <ligand>
        <name>NADP(+)</name>
        <dbReference type="ChEBI" id="CHEBI:58349"/>
    </ligand>
</feature>
<feature type="binding site" evidence="2">
    <location>
        <position position="218"/>
    </location>
    <ligand>
        <name>substrate</name>
    </ligand>
</feature>
<protein>
    <recommendedName>
        <fullName evidence="4">Probable 2,4-dienoyl-CoA reductase decr-1.2 [(3E)-enoyl-CoA-producing]</fullName>
        <ecNumber evidence="1">1.3.1.124</ecNumber>
    </recommendedName>
</protein>
<name>DEC12_CAEEL</name>
<accession>Q23116</accession>
<keyword id="KW-0521">NADP</keyword>
<keyword id="KW-0560">Oxidoreductase</keyword>
<keyword id="KW-1185">Reference proteome</keyword>
<proteinExistence type="inferred from homology"/>
<evidence type="ECO:0000250" key="1">
    <source>
        <dbReference type="UniProtKB" id="Q16698"/>
    </source>
</evidence>
<evidence type="ECO:0000250" key="2">
    <source>
        <dbReference type="UniProtKB" id="Q9NUI1"/>
    </source>
</evidence>
<evidence type="ECO:0000255" key="3"/>
<evidence type="ECO:0000305" key="4"/>
<evidence type="ECO:0000312" key="5">
    <source>
        <dbReference type="WormBase" id="W01C9.4"/>
    </source>
</evidence>
<comment type="function">
    <text evidence="1">Auxiliary enzyme of beta-oxidation. It participates in the metabolism of unsaturated fatty enoyl-CoA esters having double bonds in both even- and odd-numbered positions. Catalyzes the NADP-dependent reduction of 2,4-dienoyl-CoA to yield trans-3-enoyl-CoA.</text>
</comment>
<comment type="catalytic activity">
    <reaction evidence="1">
        <text>a (2E,4E)-dienoyl-CoA + NADPH + H(+) = a 4,5-saturated-(3E)-enoyl-CoA + NADP(+)</text>
        <dbReference type="Rhea" id="RHEA:45912"/>
        <dbReference type="ChEBI" id="CHEBI:15378"/>
        <dbReference type="ChEBI" id="CHEBI:57783"/>
        <dbReference type="ChEBI" id="CHEBI:58349"/>
        <dbReference type="ChEBI" id="CHEBI:85101"/>
        <dbReference type="ChEBI" id="CHEBI:85493"/>
        <dbReference type="EC" id="1.3.1.124"/>
    </reaction>
</comment>
<comment type="catalytic activity">
    <reaction evidence="1">
        <text>a (2E,4Z)-dienoyl-CoA + NADPH + H(+) = a 4,5-saturated-(3E)-enoyl-CoA + NADP(+)</text>
        <dbReference type="Rhea" id="RHEA:61892"/>
        <dbReference type="ChEBI" id="CHEBI:15378"/>
        <dbReference type="ChEBI" id="CHEBI:57783"/>
        <dbReference type="ChEBI" id="CHEBI:58349"/>
        <dbReference type="ChEBI" id="CHEBI:85099"/>
        <dbReference type="ChEBI" id="CHEBI:85493"/>
        <dbReference type="EC" id="1.3.1.124"/>
    </reaction>
</comment>
<comment type="similarity">
    <text evidence="4">Belongs to the short-chain dehydrogenases/reductases (SDR) family. 2,4-dienoyl-CoA reductase subfamily.</text>
</comment>
<reference key="1">
    <citation type="journal article" date="1998" name="Science">
        <title>Genome sequence of the nematode C. elegans: a platform for investigating biology.</title>
        <authorList>
            <consortium name="The C. elegans sequencing consortium"/>
        </authorList>
    </citation>
    <scope>NUCLEOTIDE SEQUENCE [LARGE SCALE GENOMIC DNA]</scope>
    <source>
        <strain>Bristol N2</strain>
    </source>
</reference>
<organism>
    <name type="scientific">Caenorhabditis elegans</name>
    <dbReference type="NCBI Taxonomy" id="6239"/>
    <lineage>
        <taxon>Eukaryota</taxon>
        <taxon>Metazoa</taxon>
        <taxon>Ecdysozoa</taxon>
        <taxon>Nematoda</taxon>
        <taxon>Chromadorea</taxon>
        <taxon>Rhabditida</taxon>
        <taxon>Rhabditina</taxon>
        <taxon>Rhabditomorpha</taxon>
        <taxon>Rhabditoidea</taxon>
        <taxon>Rhabditidae</taxon>
        <taxon>Peloderinae</taxon>
        <taxon>Caenorhabditis</taxon>
    </lineage>
</organism>